<proteinExistence type="inferred from homology"/>
<dbReference type="EC" id="2.7.8.7" evidence="1"/>
<dbReference type="EMBL" id="CU468135">
    <property type="protein sequence ID" value="CAO96042.1"/>
    <property type="molecule type" value="Genomic_DNA"/>
</dbReference>
<dbReference type="RefSeq" id="WP_012440743.1">
    <property type="nucleotide sequence ID" value="NC_010694.1"/>
</dbReference>
<dbReference type="SMR" id="B2VEA7"/>
<dbReference type="STRING" id="465817.ETA_09960"/>
<dbReference type="KEGG" id="eta:ETA_09960"/>
<dbReference type="eggNOG" id="COG0736">
    <property type="taxonomic scope" value="Bacteria"/>
</dbReference>
<dbReference type="HOGENOM" id="CLU_089696_3_1_6"/>
<dbReference type="OrthoDB" id="517356at2"/>
<dbReference type="Proteomes" id="UP000001726">
    <property type="component" value="Chromosome"/>
</dbReference>
<dbReference type="GO" id="GO:0005737">
    <property type="term" value="C:cytoplasm"/>
    <property type="evidence" value="ECO:0007669"/>
    <property type="project" value="UniProtKB-SubCell"/>
</dbReference>
<dbReference type="GO" id="GO:0008897">
    <property type="term" value="F:holo-[acyl-carrier-protein] synthase activity"/>
    <property type="evidence" value="ECO:0007669"/>
    <property type="project" value="UniProtKB-UniRule"/>
</dbReference>
<dbReference type="GO" id="GO:0000287">
    <property type="term" value="F:magnesium ion binding"/>
    <property type="evidence" value="ECO:0007669"/>
    <property type="project" value="UniProtKB-UniRule"/>
</dbReference>
<dbReference type="GO" id="GO:0006633">
    <property type="term" value="P:fatty acid biosynthetic process"/>
    <property type="evidence" value="ECO:0007669"/>
    <property type="project" value="UniProtKB-UniRule"/>
</dbReference>
<dbReference type="FunFam" id="3.90.470.20:FF:000001">
    <property type="entry name" value="Holo-[acyl-carrier-protein] synthase"/>
    <property type="match status" value="1"/>
</dbReference>
<dbReference type="Gene3D" id="3.90.470.20">
    <property type="entry name" value="4'-phosphopantetheinyl transferase domain"/>
    <property type="match status" value="1"/>
</dbReference>
<dbReference type="HAMAP" id="MF_00101">
    <property type="entry name" value="AcpS"/>
    <property type="match status" value="1"/>
</dbReference>
<dbReference type="InterPro" id="IPR008278">
    <property type="entry name" value="4-PPantetheinyl_Trfase_dom"/>
</dbReference>
<dbReference type="InterPro" id="IPR037143">
    <property type="entry name" value="4-PPantetheinyl_Trfase_dom_sf"/>
</dbReference>
<dbReference type="InterPro" id="IPR002582">
    <property type="entry name" value="ACPS"/>
</dbReference>
<dbReference type="InterPro" id="IPR004568">
    <property type="entry name" value="Ppantetheine-prot_Trfase_dom"/>
</dbReference>
<dbReference type="NCBIfam" id="TIGR00516">
    <property type="entry name" value="acpS"/>
    <property type="match status" value="1"/>
</dbReference>
<dbReference type="NCBIfam" id="TIGR00556">
    <property type="entry name" value="pantethn_trn"/>
    <property type="match status" value="1"/>
</dbReference>
<dbReference type="Pfam" id="PF01648">
    <property type="entry name" value="ACPS"/>
    <property type="match status" value="1"/>
</dbReference>
<dbReference type="SUPFAM" id="SSF56214">
    <property type="entry name" value="4'-phosphopantetheinyl transferase"/>
    <property type="match status" value="1"/>
</dbReference>
<keyword id="KW-0963">Cytoplasm</keyword>
<keyword id="KW-0275">Fatty acid biosynthesis</keyword>
<keyword id="KW-0276">Fatty acid metabolism</keyword>
<keyword id="KW-0444">Lipid biosynthesis</keyword>
<keyword id="KW-0443">Lipid metabolism</keyword>
<keyword id="KW-0460">Magnesium</keyword>
<keyword id="KW-0479">Metal-binding</keyword>
<keyword id="KW-1185">Reference proteome</keyword>
<keyword id="KW-0808">Transferase</keyword>
<comment type="function">
    <text evidence="1">Transfers the 4'-phosphopantetheine moiety from coenzyme A to a Ser of acyl-carrier-protein.</text>
</comment>
<comment type="catalytic activity">
    <reaction evidence="1">
        <text>apo-[ACP] + CoA = holo-[ACP] + adenosine 3',5'-bisphosphate + H(+)</text>
        <dbReference type="Rhea" id="RHEA:12068"/>
        <dbReference type="Rhea" id="RHEA-COMP:9685"/>
        <dbReference type="Rhea" id="RHEA-COMP:9690"/>
        <dbReference type="ChEBI" id="CHEBI:15378"/>
        <dbReference type="ChEBI" id="CHEBI:29999"/>
        <dbReference type="ChEBI" id="CHEBI:57287"/>
        <dbReference type="ChEBI" id="CHEBI:58343"/>
        <dbReference type="ChEBI" id="CHEBI:64479"/>
        <dbReference type="EC" id="2.7.8.7"/>
    </reaction>
</comment>
<comment type="cofactor">
    <cofactor evidence="1">
        <name>Mg(2+)</name>
        <dbReference type="ChEBI" id="CHEBI:18420"/>
    </cofactor>
</comment>
<comment type="subcellular location">
    <subcellularLocation>
        <location evidence="1">Cytoplasm</location>
    </subcellularLocation>
</comment>
<comment type="similarity">
    <text evidence="1">Belongs to the P-Pant transferase superfamily. AcpS family.</text>
</comment>
<reference key="1">
    <citation type="journal article" date="2008" name="Environ. Microbiol.">
        <title>The genome of Erwinia tasmaniensis strain Et1/99, a non-pathogenic bacterium in the genus Erwinia.</title>
        <authorList>
            <person name="Kube M."/>
            <person name="Migdoll A.M."/>
            <person name="Mueller I."/>
            <person name="Kuhl H."/>
            <person name="Beck A."/>
            <person name="Reinhardt R."/>
            <person name="Geider K."/>
        </authorList>
    </citation>
    <scope>NUCLEOTIDE SEQUENCE [LARGE SCALE GENOMIC DNA]</scope>
    <source>
        <strain>DSM 17950 / CFBP 7177 / CIP 109463 / NCPPB 4357 / Et1/99</strain>
    </source>
</reference>
<protein>
    <recommendedName>
        <fullName evidence="1">Holo-[acyl-carrier-protein] synthase</fullName>
        <shortName evidence="1">Holo-ACP synthase</shortName>
        <ecNumber evidence="1">2.7.8.7</ecNumber>
    </recommendedName>
    <alternativeName>
        <fullName evidence="1">4'-phosphopantetheinyl transferase AcpS</fullName>
    </alternativeName>
</protein>
<organism>
    <name type="scientific">Erwinia tasmaniensis (strain DSM 17950 / CFBP 7177 / CIP 109463 / NCPPB 4357 / Et1/99)</name>
    <dbReference type="NCBI Taxonomy" id="465817"/>
    <lineage>
        <taxon>Bacteria</taxon>
        <taxon>Pseudomonadati</taxon>
        <taxon>Pseudomonadota</taxon>
        <taxon>Gammaproteobacteria</taxon>
        <taxon>Enterobacterales</taxon>
        <taxon>Erwiniaceae</taxon>
        <taxon>Erwinia</taxon>
    </lineage>
</organism>
<accession>B2VEA7</accession>
<evidence type="ECO:0000255" key="1">
    <source>
        <dbReference type="HAMAP-Rule" id="MF_00101"/>
    </source>
</evidence>
<name>ACPS_ERWT9</name>
<gene>
    <name evidence="1" type="primary">acpS</name>
    <name type="ordered locus">ETA_09960</name>
</gene>
<sequence length="126" mass="14049">MAILGLGSDIVEIDRIAAVISRTGDRLARRVLSDNEWRQYQSHQQPVRFLAKRFAVKEAASKAFGTGIRGGLAFNQFEVYNDELGKPGLRFLEHAQEMAQKLGVAHVHVTLADERHYACATVIIES</sequence>
<feature type="chain" id="PRO_1000093875" description="Holo-[acyl-carrier-protein] synthase">
    <location>
        <begin position="1"/>
        <end position="126"/>
    </location>
</feature>
<feature type="binding site" evidence="1">
    <location>
        <position position="9"/>
    </location>
    <ligand>
        <name>Mg(2+)</name>
        <dbReference type="ChEBI" id="CHEBI:18420"/>
    </ligand>
</feature>
<feature type="binding site" evidence="1">
    <location>
        <position position="58"/>
    </location>
    <ligand>
        <name>Mg(2+)</name>
        <dbReference type="ChEBI" id="CHEBI:18420"/>
    </ligand>
</feature>